<organism>
    <name type="scientific">Aliivibrio salmonicida (strain LFI1238)</name>
    <name type="common">Vibrio salmonicida (strain LFI1238)</name>
    <dbReference type="NCBI Taxonomy" id="316275"/>
    <lineage>
        <taxon>Bacteria</taxon>
        <taxon>Pseudomonadati</taxon>
        <taxon>Pseudomonadota</taxon>
        <taxon>Gammaproteobacteria</taxon>
        <taxon>Vibrionales</taxon>
        <taxon>Vibrionaceae</taxon>
        <taxon>Aliivibrio</taxon>
    </lineage>
</organism>
<reference key="1">
    <citation type="journal article" date="2008" name="BMC Genomics">
        <title>The genome sequence of the fish pathogen Aliivibrio salmonicida strain LFI1238 shows extensive evidence of gene decay.</title>
        <authorList>
            <person name="Hjerde E."/>
            <person name="Lorentzen M.S."/>
            <person name="Holden M.T."/>
            <person name="Seeger K."/>
            <person name="Paulsen S."/>
            <person name="Bason N."/>
            <person name="Churcher C."/>
            <person name="Harris D."/>
            <person name="Norbertczak H."/>
            <person name="Quail M.A."/>
            <person name="Sanders S."/>
            <person name="Thurston S."/>
            <person name="Parkhill J."/>
            <person name="Willassen N.P."/>
            <person name="Thomson N.R."/>
        </authorList>
    </citation>
    <scope>NUCLEOTIDE SEQUENCE [LARGE SCALE GENOMIC DNA]</scope>
    <source>
        <strain>LFI1238</strain>
    </source>
</reference>
<dbReference type="EMBL" id="FM178379">
    <property type="protein sequence ID" value="CAQ80237.1"/>
    <property type="molecule type" value="Genomic_DNA"/>
</dbReference>
<dbReference type="RefSeq" id="WP_012551024.1">
    <property type="nucleotide sequence ID" value="NC_011312.1"/>
</dbReference>
<dbReference type="SMR" id="B6EKY5"/>
<dbReference type="KEGG" id="vsa:VSAL_I2553"/>
<dbReference type="eggNOG" id="COG3445">
    <property type="taxonomic scope" value="Bacteria"/>
</dbReference>
<dbReference type="HOGENOM" id="CLU_133780_0_0_6"/>
<dbReference type="Proteomes" id="UP000001730">
    <property type="component" value="Chromosome 1"/>
</dbReference>
<dbReference type="GO" id="GO:0005829">
    <property type="term" value="C:cytosol"/>
    <property type="evidence" value="ECO:0007669"/>
    <property type="project" value="TreeGrafter"/>
</dbReference>
<dbReference type="GO" id="GO:0008861">
    <property type="term" value="F:formate C-acetyltransferase activity"/>
    <property type="evidence" value="ECO:0007669"/>
    <property type="project" value="TreeGrafter"/>
</dbReference>
<dbReference type="Gene3D" id="3.20.70.20">
    <property type="match status" value="1"/>
</dbReference>
<dbReference type="HAMAP" id="MF_00806">
    <property type="entry name" value="GrcA"/>
    <property type="match status" value="1"/>
</dbReference>
<dbReference type="InterPro" id="IPR050244">
    <property type="entry name" value="Auton_GlycylRad_Cofactor"/>
</dbReference>
<dbReference type="InterPro" id="IPR019777">
    <property type="entry name" value="Form_AcTrfase_GR_CS"/>
</dbReference>
<dbReference type="InterPro" id="IPR001150">
    <property type="entry name" value="Gly_radical"/>
</dbReference>
<dbReference type="InterPro" id="IPR011140">
    <property type="entry name" value="Glycyl_radical_cofactor_GrcA"/>
</dbReference>
<dbReference type="NCBIfam" id="TIGR04365">
    <property type="entry name" value="spare_glycyl"/>
    <property type="match status" value="1"/>
</dbReference>
<dbReference type="PANTHER" id="PTHR30191">
    <property type="entry name" value="FORMATE ACETYLTRANSFERASE"/>
    <property type="match status" value="1"/>
</dbReference>
<dbReference type="PANTHER" id="PTHR30191:SF0">
    <property type="entry name" value="FORMATE ACETYLTRANSFERASE 1"/>
    <property type="match status" value="1"/>
</dbReference>
<dbReference type="Pfam" id="PF01228">
    <property type="entry name" value="Gly_radical"/>
    <property type="match status" value="1"/>
</dbReference>
<dbReference type="PIRSF" id="PIRSF000378">
    <property type="entry name" value="Gly_radicl_yfiD"/>
    <property type="match status" value="1"/>
</dbReference>
<dbReference type="SUPFAM" id="SSF51998">
    <property type="entry name" value="PFL-like glycyl radical enzymes"/>
    <property type="match status" value="1"/>
</dbReference>
<dbReference type="PROSITE" id="PS00850">
    <property type="entry name" value="GLY_RADICAL_1"/>
    <property type="match status" value="1"/>
</dbReference>
<dbReference type="PROSITE" id="PS51149">
    <property type="entry name" value="GLY_RADICAL_2"/>
    <property type="match status" value="1"/>
</dbReference>
<sequence>MITGIQITKAANDDLLNSIWLLDSEKNEARCVVATSGFEADQVIATSALGEYESRDVAIEKAPKVEGGQHLNVNVLQRDTLQDAVKHPEKYPQLTIRVSGYAVRFNSLTTEQQQDVIARTFTETL</sequence>
<accession>B6EKY5</accession>
<comment type="function">
    <text evidence="1">Acts as a radical domain for damaged PFL and possibly other radical proteins.</text>
</comment>
<proteinExistence type="inferred from homology"/>
<gene>
    <name evidence="1" type="primary">grcA</name>
    <name type="ordered locus">VSAL_I2553</name>
</gene>
<keyword id="KW-0556">Organic radical</keyword>
<name>GRCA_ALISL</name>
<feature type="chain" id="PRO_1000133980" description="Autonomous glycyl radical cofactor">
    <location>
        <begin position="1"/>
        <end position="125"/>
    </location>
</feature>
<feature type="domain" description="Glycine radical" evidence="1">
    <location>
        <begin position="5"/>
        <end position="125"/>
    </location>
</feature>
<feature type="modified residue" description="Glycine radical" evidence="1">
    <location>
        <position position="100"/>
    </location>
</feature>
<protein>
    <recommendedName>
        <fullName evidence="1">Autonomous glycyl radical cofactor</fullName>
    </recommendedName>
</protein>
<evidence type="ECO:0000255" key="1">
    <source>
        <dbReference type="HAMAP-Rule" id="MF_00806"/>
    </source>
</evidence>